<comment type="function">
    <text evidence="1">Involved in pre-mRNA splicing and cell cycle progression.</text>
</comment>
<comment type="subunit">
    <text evidence="1">Associated with the spliceosome.</text>
</comment>
<comment type="subcellular location">
    <subcellularLocation>
        <location evidence="1">Nucleus</location>
    </subcellularLocation>
</comment>
<comment type="similarity">
    <text evidence="3">Belongs to the crooked-neck family.</text>
</comment>
<proteinExistence type="inferred from homology"/>
<name>SYF1_CRYNB</name>
<accession>P0CO09</accession>
<accession>Q55SQ9</accession>
<accession>Q5KH46</accession>
<feature type="chain" id="PRO_0000410109" description="Pre-mRNA-splicing factor SYF1">
    <location>
        <begin position="1"/>
        <end position="1031"/>
    </location>
</feature>
<feature type="repeat" description="HAT 1">
    <location>
        <begin position="28"/>
        <end position="60"/>
    </location>
</feature>
<feature type="repeat" description="HAT 2">
    <location>
        <begin position="90"/>
        <end position="122"/>
    </location>
</feature>
<feature type="repeat" description="HAT 3">
    <location>
        <begin position="214"/>
        <end position="248"/>
    </location>
</feature>
<feature type="repeat" description="HAT 4">
    <location>
        <begin position="250"/>
        <end position="269"/>
    </location>
</feature>
<feature type="repeat" description="HAT 5">
    <location>
        <begin position="452"/>
        <end position="487"/>
    </location>
</feature>
<feature type="repeat" description="HAT 6">
    <location>
        <begin position="610"/>
        <end position="646"/>
    </location>
</feature>
<feature type="repeat" description="HAT 7">
    <location>
        <begin position="664"/>
        <end position="698"/>
    </location>
</feature>
<feature type="repeat" description="HAT 8">
    <location>
        <begin position="700"/>
        <end position="732"/>
    </location>
</feature>
<feature type="repeat" description="HAT 9">
    <location>
        <begin position="734"/>
        <end position="768"/>
    </location>
</feature>
<feature type="repeat" description="HAT 10">
    <location>
        <begin position="773"/>
        <end position="807"/>
    </location>
</feature>
<feature type="repeat" description="HAT 11">
    <location>
        <begin position="845"/>
        <end position="879"/>
    </location>
</feature>
<feature type="repeat" description="HAT 12">
    <location>
        <begin position="881"/>
        <end position="915"/>
    </location>
</feature>
<feature type="region of interest" description="Disordered" evidence="2">
    <location>
        <begin position="346"/>
        <end position="368"/>
    </location>
</feature>
<feature type="region of interest" description="Disordered" evidence="2">
    <location>
        <begin position="948"/>
        <end position="969"/>
    </location>
</feature>
<feature type="region of interest" description="Disordered" evidence="2">
    <location>
        <begin position="1003"/>
        <end position="1031"/>
    </location>
</feature>
<feature type="compositionally biased region" description="Low complexity" evidence="2">
    <location>
        <begin position="353"/>
        <end position="368"/>
    </location>
</feature>
<reference key="1">
    <citation type="journal article" date="2005" name="Science">
        <title>The genome of the basidiomycetous yeast and human pathogen Cryptococcus neoformans.</title>
        <authorList>
            <person name="Loftus B.J."/>
            <person name="Fung E."/>
            <person name="Roncaglia P."/>
            <person name="Rowley D."/>
            <person name="Amedeo P."/>
            <person name="Bruno D."/>
            <person name="Vamathevan J."/>
            <person name="Miranda M."/>
            <person name="Anderson I.J."/>
            <person name="Fraser J.A."/>
            <person name="Allen J.E."/>
            <person name="Bosdet I.E."/>
            <person name="Brent M.R."/>
            <person name="Chiu R."/>
            <person name="Doering T.L."/>
            <person name="Donlin M.J."/>
            <person name="D'Souza C.A."/>
            <person name="Fox D.S."/>
            <person name="Grinberg V."/>
            <person name="Fu J."/>
            <person name="Fukushima M."/>
            <person name="Haas B.J."/>
            <person name="Huang J.C."/>
            <person name="Janbon G."/>
            <person name="Jones S.J.M."/>
            <person name="Koo H.L."/>
            <person name="Krzywinski M.I."/>
            <person name="Kwon-Chung K.J."/>
            <person name="Lengeler K.B."/>
            <person name="Maiti R."/>
            <person name="Marra M.A."/>
            <person name="Marra R.E."/>
            <person name="Mathewson C.A."/>
            <person name="Mitchell T.G."/>
            <person name="Pertea M."/>
            <person name="Riggs F.R."/>
            <person name="Salzberg S.L."/>
            <person name="Schein J.E."/>
            <person name="Shvartsbeyn A."/>
            <person name="Shin H."/>
            <person name="Shumway M."/>
            <person name="Specht C.A."/>
            <person name="Suh B.B."/>
            <person name="Tenney A."/>
            <person name="Utterback T.R."/>
            <person name="Wickes B.L."/>
            <person name="Wortman J.R."/>
            <person name="Wye N.H."/>
            <person name="Kronstad J.W."/>
            <person name="Lodge J.K."/>
            <person name="Heitman J."/>
            <person name="Davis R.W."/>
            <person name="Fraser C.M."/>
            <person name="Hyman R.W."/>
        </authorList>
    </citation>
    <scope>NUCLEOTIDE SEQUENCE [LARGE SCALE GENOMIC DNA]</scope>
    <source>
        <strain>B-3501A</strain>
    </source>
</reference>
<gene>
    <name type="primary">SYF1</name>
    <name type="ordered locus">CNBE1250</name>
</gene>
<organism>
    <name type="scientific">Cryptococcus neoformans var. neoformans serotype D (strain B-3501A)</name>
    <name type="common">Filobasidiella neoformans</name>
    <dbReference type="NCBI Taxonomy" id="283643"/>
    <lineage>
        <taxon>Eukaryota</taxon>
        <taxon>Fungi</taxon>
        <taxon>Dikarya</taxon>
        <taxon>Basidiomycota</taxon>
        <taxon>Agaricomycotina</taxon>
        <taxon>Tremellomycetes</taxon>
        <taxon>Tremellales</taxon>
        <taxon>Cryptococcaceae</taxon>
        <taxon>Cryptococcus</taxon>
        <taxon>Cryptococcus neoformans species complex</taxon>
    </lineage>
</organism>
<sequence>MASTSLVDSLTSHFPLTLPIPTPITHPHLIPSADLPVEEDLLHNPENLRSWLSYIHNVKEKIAADEPAKGGVLSPEEEILGPLASKNARDGLQRLVSIYERAIAVFPTSYKLWKAYYLTRQSYVLGELTNDAKEARSQQAKRGAAYKTNVRELLDGAEEAHEWTGGLDPVVGYAEWRSLVATGERMIMCLPNLPIPWLLHLGVLLHPKCPSVFKNGSYARRAFDRALRTLPPSLHGRVWGLYLRWAEIVGGDAGERVWRRYLKVDPSLTERHITYLLEAEEPRPLAAAKYLLSIARRAQQNLYSSLEGKSPYQLFVDFLELVEKYADQIGMDEEGTLELQRTKRAVEEKVDGEQPQVEGQEQQPQEEPASINGRLMRIAGPPVPLEQGKLFKPVNAASAQAPTQLTYDEDTDPSNPRLLDVEGIVERDGLQVYKDQAGRLWTGLATYWIKRGEFERATATFERGLAAVVTIRDFTQIFDAYAEFSETMISTLMDALADEDNLEDEDFDAEETEQELDERMKSFEELMDRRPFLVNDVLLRRNPNEVVEWEKRIALHGDDDAKVVEAYVKALDTINPRKATGPLYPLYVNFAKFYEEGGSKDDNGEPRNEPDLEQARKIFERATKVPFKAVDELAEVWCEWAEMELRNENYEEAIRLMQRATTVPKNTKINYYDDNIPPQSRLFKSLKLWSYYSDLEESIGTVESTKAVYDKIMELKIANAQVIVNYATFLEENKYFEESFKVYERGIELFHFPIAFEIWNIYLSKFVKRYGGKKLERARDLFEQALENCPEKFCKPLYLMYAKLEEEHGLAKRAMGIYDRAASTVQDSDKFEMYTIYIAKATANFGLPATRPIYERALESLPDKQTAEMCRRFARMERKLGEIDRARAIYAHASQFCDPRIEPEFWQEWNDFEIETGSEDTFREMLRIKRAVQASFNTETSFIAAQAAAASKGTEKPTDTSAQEAQDAADPMAAMERELSAAGADGARKGGAPAFVASTLNKTNANGIDEGGEETGEMANPDAIVMDEDEF</sequence>
<keyword id="KW-0507">mRNA processing</keyword>
<keyword id="KW-0508">mRNA splicing</keyword>
<keyword id="KW-0539">Nucleus</keyword>
<keyword id="KW-0677">Repeat</keyword>
<keyword id="KW-0747">Spliceosome</keyword>
<dbReference type="EMBL" id="AAEY01000024">
    <property type="protein sequence ID" value="EAL20762.1"/>
    <property type="molecule type" value="Genomic_DNA"/>
</dbReference>
<dbReference type="RefSeq" id="XP_775409.1">
    <property type="nucleotide sequence ID" value="XM_770316.1"/>
</dbReference>
<dbReference type="SMR" id="P0CO09"/>
<dbReference type="EnsemblFungi" id="AAW43409">
    <property type="protein sequence ID" value="AAW43409"/>
    <property type="gene ID" value="CNE01310"/>
</dbReference>
<dbReference type="GeneID" id="4936133"/>
<dbReference type="KEGG" id="cnb:CNBE1250"/>
<dbReference type="VEuPathDB" id="FungiDB:CNBE1250"/>
<dbReference type="HOGENOM" id="CLU_007736_1_0_1"/>
<dbReference type="OrthoDB" id="3311at5206"/>
<dbReference type="GO" id="GO:0071014">
    <property type="term" value="C:post-mRNA release spliceosomal complex"/>
    <property type="evidence" value="ECO:0007669"/>
    <property type="project" value="TreeGrafter"/>
</dbReference>
<dbReference type="GO" id="GO:0000974">
    <property type="term" value="C:Prp19 complex"/>
    <property type="evidence" value="ECO:0007669"/>
    <property type="project" value="TreeGrafter"/>
</dbReference>
<dbReference type="GO" id="GO:0071007">
    <property type="term" value="C:U2-type catalytic step 2 spliceosome"/>
    <property type="evidence" value="ECO:0007669"/>
    <property type="project" value="TreeGrafter"/>
</dbReference>
<dbReference type="GO" id="GO:0000349">
    <property type="term" value="P:generation of catalytic spliceosome for first transesterification step"/>
    <property type="evidence" value="ECO:0007669"/>
    <property type="project" value="TreeGrafter"/>
</dbReference>
<dbReference type="FunFam" id="1.25.40.10:FF:000023">
    <property type="entry name" value="Pre-mRNA-splicing factor SYF1"/>
    <property type="match status" value="1"/>
</dbReference>
<dbReference type="FunFam" id="1.25.40.10:FF:000137">
    <property type="entry name" value="Pre-mRNA-splicing factor syf1"/>
    <property type="match status" value="1"/>
</dbReference>
<dbReference type="FunFam" id="1.25.40.10:FF:000038">
    <property type="entry name" value="Putative pre-mRNA-splicing factor SYF1"/>
    <property type="match status" value="1"/>
</dbReference>
<dbReference type="Gene3D" id="1.25.40.10">
    <property type="entry name" value="Tetratricopeptide repeat domain"/>
    <property type="match status" value="4"/>
</dbReference>
<dbReference type="InterPro" id="IPR003107">
    <property type="entry name" value="HAT"/>
</dbReference>
<dbReference type="InterPro" id="IPR055433">
    <property type="entry name" value="HAT_Syf1-like_N"/>
</dbReference>
<dbReference type="InterPro" id="IPR056350">
    <property type="entry name" value="HAT_Syf1_central"/>
</dbReference>
<dbReference type="InterPro" id="IPR055430">
    <property type="entry name" value="HAT_Syf1_CNRKL1_C"/>
</dbReference>
<dbReference type="InterPro" id="IPR045075">
    <property type="entry name" value="Syf1-like"/>
</dbReference>
<dbReference type="InterPro" id="IPR011990">
    <property type="entry name" value="TPR-like_helical_dom_sf"/>
</dbReference>
<dbReference type="InterPro" id="IPR019734">
    <property type="entry name" value="TPR_rpt"/>
</dbReference>
<dbReference type="PANTHER" id="PTHR11246">
    <property type="entry name" value="PRE-MRNA SPLICING FACTOR"/>
    <property type="match status" value="1"/>
</dbReference>
<dbReference type="PANTHER" id="PTHR11246:SF5">
    <property type="entry name" value="PRE-MRNA-SPLICING FACTOR SYF1"/>
    <property type="match status" value="1"/>
</dbReference>
<dbReference type="Pfam" id="PF23231">
    <property type="entry name" value="HAT_Syf1_CNRKL1_C"/>
    <property type="match status" value="1"/>
</dbReference>
<dbReference type="Pfam" id="PF23233">
    <property type="entry name" value="HAT_Syf1_CNRKL1_N"/>
    <property type="match status" value="1"/>
</dbReference>
<dbReference type="Pfam" id="PF23220">
    <property type="entry name" value="HAT_Syf1_M"/>
    <property type="match status" value="1"/>
</dbReference>
<dbReference type="SMART" id="SM00386">
    <property type="entry name" value="HAT"/>
    <property type="match status" value="10"/>
</dbReference>
<dbReference type="SMART" id="SM00028">
    <property type="entry name" value="TPR"/>
    <property type="match status" value="4"/>
</dbReference>
<dbReference type="SUPFAM" id="SSF48452">
    <property type="entry name" value="TPR-like"/>
    <property type="match status" value="3"/>
</dbReference>
<protein>
    <recommendedName>
        <fullName>Pre-mRNA-splicing factor SYF1</fullName>
    </recommendedName>
</protein>
<evidence type="ECO:0000250" key="1"/>
<evidence type="ECO:0000256" key="2">
    <source>
        <dbReference type="SAM" id="MobiDB-lite"/>
    </source>
</evidence>
<evidence type="ECO:0000305" key="3"/>